<name>PNP_SULNB</name>
<gene>
    <name evidence="1" type="primary">pnp</name>
    <name type="ordered locus">SUN_1886</name>
</gene>
<keyword id="KW-0963">Cytoplasm</keyword>
<keyword id="KW-0460">Magnesium</keyword>
<keyword id="KW-0479">Metal-binding</keyword>
<keyword id="KW-0548">Nucleotidyltransferase</keyword>
<keyword id="KW-0694">RNA-binding</keyword>
<keyword id="KW-0808">Transferase</keyword>
<evidence type="ECO:0000255" key="1">
    <source>
        <dbReference type="HAMAP-Rule" id="MF_01595"/>
    </source>
</evidence>
<proteinExistence type="inferred from homology"/>
<feature type="chain" id="PRO_0000329892" description="Polyribonucleotide nucleotidyltransferase">
    <location>
        <begin position="1"/>
        <end position="729"/>
    </location>
</feature>
<feature type="domain" description="KH" evidence="1">
    <location>
        <begin position="581"/>
        <end position="641"/>
    </location>
</feature>
<feature type="domain" description="S1 motif" evidence="1">
    <location>
        <begin position="658"/>
        <end position="725"/>
    </location>
</feature>
<feature type="binding site" evidence="1">
    <location>
        <position position="516"/>
    </location>
    <ligand>
        <name>Mg(2+)</name>
        <dbReference type="ChEBI" id="CHEBI:18420"/>
    </ligand>
</feature>
<feature type="binding site" evidence="1">
    <location>
        <position position="522"/>
    </location>
    <ligand>
        <name>Mg(2+)</name>
        <dbReference type="ChEBI" id="CHEBI:18420"/>
    </ligand>
</feature>
<sequence length="729" mass="80159">MNEQIIEINLNNLDEKYEFNKIAKQASGAVMYRQGKAVLIAAVAVDEKAVEEDFLPLTVQYMERSYAAAKIPGGFIKRETKPGDFETLTSRIVDRSLRPLFPKGFYYPVTISVMVVSSDSEVDMQVAALHAANAALYVSDISVQRSIAAVRVGKIEDELVLNPTLSQQDESVLDLLVVGSEQDIIMIEMRAIASEKIDDIEMDMIDPMMGGVPLILEHQECNEVDNEALVDAIAFAAKAIEEASAIYEKEFTPVMRTPLGLSLAEEKVDEELYAYIKENYSEAVAKAISHMAKSERSTELKKVRAQIMEALESEGKEADKELVSKVLDRYKTTVVRDMILDKGIRADGRGLDEVRPITIETNILPSVHGSCLFTRGQTQALVTATLGDKKDAQMFELITDKNTQSENFMVHYNFPGYSVGEAKFIGAPGRRELGHGNLAKRALEPVIPINYDGTIRLVSEVLESNGSSSMATICGGALALRAAEVDMVELVAGIAMGLVTDGERVAVLTDIMGLEDHDGDMDFKIAGTRNGITALQMDIKLGGIDLITLKVALEKAAQGKDHILDLMEEAEKKMESSQALPSTEHFSINPQKIADIIGKAGATIRDIIEKFEVSIDLDRDKGGVKLSGHDKEKVAAAKEHIEKIANAPVRKQMQYEVGKTYVGKVKKIVDFGIFVEMPDGFDALLHISKVAKERVNNLNERYHEGDDITVVVMEQKGKKVELATPEYLA</sequence>
<accession>A6QBH4</accession>
<reference key="1">
    <citation type="journal article" date="2007" name="Proc. Natl. Acad. Sci. U.S.A.">
        <title>Deep-sea vent epsilon-proteobacterial genomes provide insights into emergence of pathogens.</title>
        <authorList>
            <person name="Nakagawa S."/>
            <person name="Takaki Y."/>
            <person name="Shimamura S."/>
            <person name="Reysenbach A.-L."/>
            <person name="Takai K."/>
            <person name="Horikoshi K."/>
        </authorList>
    </citation>
    <scope>NUCLEOTIDE SEQUENCE [LARGE SCALE GENOMIC DNA]</scope>
    <source>
        <strain>NBC37-1</strain>
    </source>
</reference>
<comment type="function">
    <text evidence="1">Involved in mRNA degradation. Catalyzes the phosphorolysis of single-stranded polyribonucleotides processively in the 3'- to 5'-direction.</text>
</comment>
<comment type="catalytic activity">
    <reaction evidence="1">
        <text>RNA(n+1) + phosphate = RNA(n) + a ribonucleoside 5'-diphosphate</text>
        <dbReference type="Rhea" id="RHEA:22096"/>
        <dbReference type="Rhea" id="RHEA-COMP:14527"/>
        <dbReference type="Rhea" id="RHEA-COMP:17342"/>
        <dbReference type="ChEBI" id="CHEBI:43474"/>
        <dbReference type="ChEBI" id="CHEBI:57930"/>
        <dbReference type="ChEBI" id="CHEBI:140395"/>
        <dbReference type="EC" id="2.7.7.8"/>
    </reaction>
</comment>
<comment type="cofactor">
    <cofactor evidence="1">
        <name>Mg(2+)</name>
        <dbReference type="ChEBI" id="CHEBI:18420"/>
    </cofactor>
</comment>
<comment type="subcellular location">
    <subcellularLocation>
        <location evidence="1">Cytoplasm</location>
    </subcellularLocation>
</comment>
<comment type="similarity">
    <text evidence="1">Belongs to the polyribonucleotide nucleotidyltransferase family.</text>
</comment>
<dbReference type="EC" id="2.7.7.8" evidence="1"/>
<dbReference type="EMBL" id="AP009179">
    <property type="protein sequence ID" value="BAF72833.1"/>
    <property type="molecule type" value="Genomic_DNA"/>
</dbReference>
<dbReference type="RefSeq" id="WP_012083646.1">
    <property type="nucleotide sequence ID" value="NC_009663.1"/>
</dbReference>
<dbReference type="SMR" id="A6QBH4"/>
<dbReference type="STRING" id="387093.SUN_1886"/>
<dbReference type="KEGG" id="sun:SUN_1886"/>
<dbReference type="eggNOG" id="COG1185">
    <property type="taxonomic scope" value="Bacteria"/>
</dbReference>
<dbReference type="HOGENOM" id="CLU_004217_2_2_7"/>
<dbReference type="OrthoDB" id="9804305at2"/>
<dbReference type="Proteomes" id="UP000006378">
    <property type="component" value="Chromosome"/>
</dbReference>
<dbReference type="GO" id="GO:0005829">
    <property type="term" value="C:cytosol"/>
    <property type="evidence" value="ECO:0007669"/>
    <property type="project" value="TreeGrafter"/>
</dbReference>
<dbReference type="GO" id="GO:0000175">
    <property type="term" value="F:3'-5'-RNA exonuclease activity"/>
    <property type="evidence" value="ECO:0007669"/>
    <property type="project" value="TreeGrafter"/>
</dbReference>
<dbReference type="GO" id="GO:0000287">
    <property type="term" value="F:magnesium ion binding"/>
    <property type="evidence" value="ECO:0007669"/>
    <property type="project" value="UniProtKB-UniRule"/>
</dbReference>
<dbReference type="GO" id="GO:0004654">
    <property type="term" value="F:polyribonucleotide nucleotidyltransferase activity"/>
    <property type="evidence" value="ECO:0007669"/>
    <property type="project" value="UniProtKB-UniRule"/>
</dbReference>
<dbReference type="GO" id="GO:0003723">
    <property type="term" value="F:RNA binding"/>
    <property type="evidence" value="ECO:0007669"/>
    <property type="project" value="UniProtKB-UniRule"/>
</dbReference>
<dbReference type="GO" id="GO:0006402">
    <property type="term" value="P:mRNA catabolic process"/>
    <property type="evidence" value="ECO:0007669"/>
    <property type="project" value="UniProtKB-UniRule"/>
</dbReference>
<dbReference type="GO" id="GO:0006396">
    <property type="term" value="P:RNA processing"/>
    <property type="evidence" value="ECO:0007669"/>
    <property type="project" value="InterPro"/>
</dbReference>
<dbReference type="CDD" id="cd02393">
    <property type="entry name" value="KH-I_PNPase"/>
    <property type="match status" value="1"/>
</dbReference>
<dbReference type="CDD" id="cd11364">
    <property type="entry name" value="RNase_PH_PNPase_2"/>
    <property type="match status" value="1"/>
</dbReference>
<dbReference type="FunFam" id="3.30.1370.10:FF:000001">
    <property type="entry name" value="Polyribonucleotide nucleotidyltransferase"/>
    <property type="match status" value="1"/>
</dbReference>
<dbReference type="FunFam" id="3.30.230.70:FF:000026">
    <property type="entry name" value="Polyribonucleotide nucleotidyltransferase"/>
    <property type="match status" value="1"/>
</dbReference>
<dbReference type="FunFam" id="3.30.230.70:FF:000029">
    <property type="entry name" value="Polyribonucleotide nucleotidyltransferase"/>
    <property type="match status" value="1"/>
</dbReference>
<dbReference type="Gene3D" id="3.30.230.70">
    <property type="entry name" value="GHMP Kinase, N-terminal domain"/>
    <property type="match status" value="2"/>
</dbReference>
<dbReference type="Gene3D" id="3.30.1370.10">
    <property type="entry name" value="K Homology domain, type 1"/>
    <property type="match status" value="1"/>
</dbReference>
<dbReference type="Gene3D" id="2.40.50.140">
    <property type="entry name" value="Nucleic acid-binding proteins"/>
    <property type="match status" value="1"/>
</dbReference>
<dbReference type="HAMAP" id="MF_01595">
    <property type="entry name" value="PNPase"/>
    <property type="match status" value="1"/>
</dbReference>
<dbReference type="InterPro" id="IPR001247">
    <property type="entry name" value="ExoRNase_PH_dom1"/>
</dbReference>
<dbReference type="InterPro" id="IPR015847">
    <property type="entry name" value="ExoRNase_PH_dom2"/>
</dbReference>
<dbReference type="InterPro" id="IPR036345">
    <property type="entry name" value="ExoRNase_PH_dom2_sf"/>
</dbReference>
<dbReference type="InterPro" id="IPR004087">
    <property type="entry name" value="KH_dom"/>
</dbReference>
<dbReference type="InterPro" id="IPR004088">
    <property type="entry name" value="KH_dom_type_1"/>
</dbReference>
<dbReference type="InterPro" id="IPR036612">
    <property type="entry name" value="KH_dom_type_1_sf"/>
</dbReference>
<dbReference type="InterPro" id="IPR012340">
    <property type="entry name" value="NA-bd_OB-fold"/>
</dbReference>
<dbReference type="InterPro" id="IPR012162">
    <property type="entry name" value="PNPase"/>
</dbReference>
<dbReference type="InterPro" id="IPR027408">
    <property type="entry name" value="PNPase/RNase_PH_dom_sf"/>
</dbReference>
<dbReference type="InterPro" id="IPR015848">
    <property type="entry name" value="PNPase_PH_RNA-bd_bac/org-type"/>
</dbReference>
<dbReference type="InterPro" id="IPR020568">
    <property type="entry name" value="Ribosomal_Su5_D2-typ_SF"/>
</dbReference>
<dbReference type="InterPro" id="IPR003029">
    <property type="entry name" value="S1_domain"/>
</dbReference>
<dbReference type="NCBIfam" id="TIGR03591">
    <property type="entry name" value="polynuc_phos"/>
    <property type="match status" value="1"/>
</dbReference>
<dbReference type="NCBIfam" id="NF008805">
    <property type="entry name" value="PRK11824.1"/>
    <property type="match status" value="1"/>
</dbReference>
<dbReference type="PANTHER" id="PTHR11252">
    <property type="entry name" value="POLYRIBONUCLEOTIDE NUCLEOTIDYLTRANSFERASE"/>
    <property type="match status" value="1"/>
</dbReference>
<dbReference type="PANTHER" id="PTHR11252:SF0">
    <property type="entry name" value="POLYRIBONUCLEOTIDE NUCLEOTIDYLTRANSFERASE 1, MITOCHONDRIAL"/>
    <property type="match status" value="1"/>
</dbReference>
<dbReference type="Pfam" id="PF00013">
    <property type="entry name" value="KH_1"/>
    <property type="match status" value="1"/>
</dbReference>
<dbReference type="Pfam" id="PF03726">
    <property type="entry name" value="PNPase"/>
    <property type="match status" value="1"/>
</dbReference>
<dbReference type="Pfam" id="PF01138">
    <property type="entry name" value="RNase_PH"/>
    <property type="match status" value="2"/>
</dbReference>
<dbReference type="Pfam" id="PF03725">
    <property type="entry name" value="RNase_PH_C"/>
    <property type="match status" value="1"/>
</dbReference>
<dbReference type="Pfam" id="PF00575">
    <property type="entry name" value="S1"/>
    <property type="match status" value="1"/>
</dbReference>
<dbReference type="PIRSF" id="PIRSF005499">
    <property type="entry name" value="PNPase"/>
    <property type="match status" value="1"/>
</dbReference>
<dbReference type="SMART" id="SM00322">
    <property type="entry name" value="KH"/>
    <property type="match status" value="1"/>
</dbReference>
<dbReference type="SMART" id="SM00316">
    <property type="entry name" value="S1"/>
    <property type="match status" value="1"/>
</dbReference>
<dbReference type="SUPFAM" id="SSF54791">
    <property type="entry name" value="Eukaryotic type KH-domain (KH-domain type I)"/>
    <property type="match status" value="1"/>
</dbReference>
<dbReference type="SUPFAM" id="SSF50249">
    <property type="entry name" value="Nucleic acid-binding proteins"/>
    <property type="match status" value="1"/>
</dbReference>
<dbReference type="SUPFAM" id="SSF55666">
    <property type="entry name" value="Ribonuclease PH domain 2-like"/>
    <property type="match status" value="2"/>
</dbReference>
<dbReference type="SUPFAM" id="SSF54211">
    <property type="entry name" value="Ribosomal protein S5 domain 2-like"/>
    <property type="match status" value="2"/>
</dbReference>
<dbReference type="PROSITE" id="PS50084">
    <property type="entry name" value="KH_TYPE_1"/>
    <property type="match status" value="1"/>
</dbReference>
<dbReference type="PROSITE" id="PS50126">
    <property type="entry name" value="S1"/>
    <property type="match status" value="1"/>
</dbReference>
<organism>
    <name type="scientific">Sulfurovum sp. (strain NBC37-1)</name>
    <dbReference type="NCBI Taxonomy" id="387093"/>
    <lineage>
        <taxon>Bacteria</taxon>
        <taxon>Pseudomonadati</taxon>
        <taxon>Campylobacterota</taxon>
        <taxon>Epsilonproteobacteria</taxon>
        <taxon>Campylobacterales</taxon>
        <taxon>Sulfurovaceae</taxon>
        <taxon>Sulfurovum</taxon>
    </lineage>
</organism>
<protein>
    <recommendedName>
        <fullName evidence="1">Polyribonucleotide nucleotidyltransferase</fullName>
        <ecNumber evidence="1">2.7.7.8</ecNumber>
    </recommendedName>
    <alternativeName>
        <fullName evidence="1">Polynucleotide phosphorylase</fullName>
        <shortName evidence="1">PNPase</shortName>
    </alternativeName>
</protein>